<protein>
    <recommendedName>
        <fullName evidence="1">Regulatory protein RecX</fullName>
    </recommendedName>
</protein>
<feature type="chain" id="PRO_1000164009" description="Regulatory protein RecX">
    <location>
        <begin position="1"/>
        <end position="150"/>
    </location>
</feature>
<reference key="1">
    <citation type="submission" date="2008-08" db="EMBL/GenBank/DDBJ databases">
        <title>Complete sequence of Acidithiobacillus ferrooxidans ATCC 53993.</title>
        <authorList>
            <person name="Lucas S."/>
            <person name="Copeland A."/>
            <person name="Lapidus A."/>
            <person name="Glavina del Rio T."/>
            <person name="Dalin E."/>
            <person name="Tice H."/>
            <person name="Bruce D."/>
            <person name="Goodwin L."/>
            <person name="Pitluck S."/>
            <person name="Sims D."/>
            <person name="Brettin T."/>
            <person name="Detter J.C."/>
            <person name="Han C."/>
            <person name="Kuske C.R."/>
            <person name="Larimer F."/>
            <person name="Land M."/>
            <person name="Hauser L."/>
            <person name="Kyrpides N."/>
            <person name="Lykidis A."/>
            <person name="Borole A.P."/>
        </authorList>
    </citation>
    <scope>NUCLEOTIDE SEQUENCE [LARGE SCALE GENOMIC DNA]</scope>
    <source>
        <strain>ATCC 53993 / BNL-5-31</strain>
    </source>
</reference>
<accession>B5EQ48</accession>
<evidence type="ECO:0000255" key="1">
    <source>
        <dbReference type="HAMAP-Rule" id="MF_01114"/>
    </source>
</evidence>
<name>RECX_ACIF5</name>
<sequence>MTTERSDPTALALRLLARREYGRRELGDKLLRAGCDAGDVALALDALAAAGYQDDARYVEMLTRTRVRQGHGPLRLRQDLQRAGIEVGADPEIDWLQQAQAVCRKRFGNTPPADARDYARRARFLAGRGFTGETIRQVLGAGRERDFAAD</sequence>
<proteinExistence type="inferred from homology"/>
<comment type="function">
    <text evidence="1">Modulates RecA activity.</text>
</comment>
<comment type="subcellular location">
    <subcellularLocation>
        <location evidence="1">Cytoplasm</location>
    </subcellularLocation>
</comment>
<comment type="similarity">
    <text evidence="1">Belongs to the RecX family.</text>
</comment>
<organism>
    <name type="scientific">Acidithiobacillus ferrooxidans (strain ATCC 53993 / BNL-5-31)</name>
    <name type="common">Leptospirillum ferrooxidans (ATCC 53993)</name>
    <dbReference type="NCBI Taxonomy" id="380394"/>
    <lineage>
        <taxon>Bacteria</taxon>
        <taxon>Pseudomonadati</taxon>
        <taxon>Pseudomonadota</taxon>
        <taxon>Acidithiobacillia</taxon>
        <taxon>Acidithiobacillales</taxon>
        <taxon>Acidithiobacillaceae</taxon>
        <taxon>Acidithiobacillus</taxon>
    </lineage>
</organism>
<dbReference type="EMBL" id="CP001132">
    <property type="protein sequence ID" value="ACH83293.1"/>
    <property type="molecule type" value="Genomic_DNA"/>
</dbReference>
<dbReference type="RefSeq" id="WP_009564301.1">
    <property type="nucleotide sequence ID" value="NC_011206.1"/>
</dbReference>
<dbReference type="SMR" id="B5EQ48"/>
<dbReference type="KEGG" id="afe:Lferr_1051"/>
<dbReference type="eggNOG" id="COG2137">
    <property type="taxonomic scope" value="Bacteria"/>
</dbReference>
<dbReference type="HOGENOM" id="CLU_066607_3_2_6"/>
<dbReference type="GO" id="GO:0005737">
    <property type="term" value="C:cytoplasm"/>
    <property type="evidence" value="ECO:0007669"/>
    <property type="project" value="UniProtKB-SubCell"/>
</dbReference>
<dbReference type="GO" id="GO:0006282">
    <property type="term" value="P:regulation of DNA repair"/>
    <property type="evidence" value="ECO:0007669"/>
    <property type="project" value="UniProtKB-UniRule"/>
</dbReference>
<dbReference type="Gene3D" id="1.10.10.10">
    <property type="entry name" value="Winged helix-like DNA-binding domain superfamily/Winged helix DNA-binding domain"/>
    <property type="match status" value="3"/>
</dbReference>
<dbReference type="HAMAP" id="MF_01114">
    <property type="entry name" value="RecX"/>
    <property type="match status" value="1"/>
</dbReference>
<dbReference type="InterPro" id="IPR053926">
    <property type="entry name" value="RecX_HTH_1st"/>
</dbReference>
<dbReference type="InterPro" id="IPR053924">
    <property type="entry name" value="RecX_HTH_2nd"/>
</dbReference>
<dbReference type="InterPro" id="IPR053925">
    <property type="entry name" value="RecX_HTH_3rd"/>
</dbReference>
<dbReference type="InterPro" id="IPR003783">
    <property type="entry name" value="Regulatory_RecX"/>
</dbReference>
<dbReference type="InterPro" id="IPR036388">
    <property type="entry name" value="WH-like_DNA-bd_sf"/>
</dbReference>
<dbReference type="PANTHER" id="PTHR33602">
    <property type="entry name" value="REGULATORY PROTEIN RECX FAMILY PROTEIN"/>
    <property type="match status" value="1"/>
</dbReference>
<dbReference type="PANTHER" id="PTHR33602:SF1">
    <property type="entry name" value="REGULATORY PROTEIN RECX FAMILY PROTEIN"/>
    <property type="match status" value="1"/>
</dbReference>
<dbReference type="Pfam" id="PF21982">
    <property type="entry name" value="RecX_HTH1"/>
    <property type="match status" value="1"/>
</dbReference>
<dbReference type="Pfam" id="PF02631">
    <property type="entry name" value="RecX_HTH2"/>
    <property type="match status" value="1"/>
</dbReference>
<dbReference type="Pfam" id="PF21981">
    <property type="entry name" value="RecX_HTH3"/>
    <property type="match status" value="1"/>
</dbReference>
<keyword id="KW-0963">Cytoplasm</keyword>
<gene>
    <name evidence="1" type="primary">recX</name>
    <name type="ordered locus">Lferr_1051</name>
</gene>